<sequence length="365" mass="39015">MSTDITPSSAPQCPDHIVFEHVTKEFRTRSGTVRALDDVSLAIKRGSISAVIGHSGAGKSTLVRLINGLETPTRGRVLVDGTDVSQLSDKAMRPLRADIGMIFQQFNLFGSRTIYDNVAYPLKLAHWKKADEKKRITELLSFVGLTSKAWDHPDQLSGGQKQRVGIARALATKPSILLADESTSALDPETTADVLSLLKRVNAELGVTVVVITHEMEVVRSIAQQVSVLAAGHLVESGSARQVFAHPQSETTQRFLATIIGQHPNGEEQARLQSENPHARLVDVSSVASHSFGDALARISHTGASFQIVHGGVIEVHDGSLGNYTVALSGPAQAVEQAVQILEEVSNSAAPTTSATVPTPTEEAH</sequence>
<organism>
    <name type="scientific">Cutibacterium acnes (strain DSM 16379 / KPA171202)</name>
    <name type="common">Propionibacterium acnes</name>
    <dbReference type="NCBI Taxonomy" id="267747"/>
    <lineage>
        <taxon>Bacteria</taxon>
        <taxon>Bacillati</taxon>
        <taxon>Actinomycetota</taxon>
        <taxon>Actinomycetes</taxon>
        <taxon>Propionibacteriales</taxon>
        <taxon>Propionibacteriaceae</taxon>
        <taxon>Cutibacterium</taxon>
    </lineage>
</organism>
<evidence type="ECO:0000255" key="1">
    <source>
        <dbReference type="HAMAP-Rule" id="MF_01719"/>
    </source>
</evidence>
<evidence type="ECO:0000256" key="2">
    <source>
        <dbReference type="SAM" id="MobiDB-lite"/>
    </source>
</evidence>
<feature type="chain" id="PRO_0000270343" description="Methionine import ATP-binding protein MetN">
    <location>
        <begin position="1"/>
        <end position="365"/>
    </location>
</feature>
<feature type="domain" description="ABC transporter" evidence="1">
    <location>
        <begin position="17"/>
        <end position="256"/>
    </location>
</feature>
<feature type="region of interest" description="Disordered" evidence="2">
    <location>
        <begin position="346"/>
        <end position="365"/>
    </location>
</feature>
<feature type="binding site" evidence="1">
    <location>
        <begin position="53"/>
        <end position="60"/>
    </location>
    <ligand>
        <name>ATP</name>
        <dbReference type="ChEBI" id="CHEBI:30616"/>
    </ligand>
</feature>
<protein>
    <recommendedName>
        <fullName evidence="1">Methionine import ATP-binding protein MetN</fullName>
        <ecNumber evidence="1">7.4.2.11</ecNumber>
    </recommendedName>
</protein>
<comment type="function">
    <text evidence="1">Part of the ABC transporter complex MetNIQ involved in methionine import. Responsible for energy coupling to the transport system.</text>
</comment>
<comment type="catalytic activity">
    <reaction evidence="1">
        <text>L-methionine(out) + ATP + H2O = L-methionine(in) + ADP + phosphate + H(+)</text>
        <dbReference type="Rhea" id="RHEA:29779"/>
        <dbReference type="ChEBI" id="CHEBI:15377"/>
        <dbReference type="ChEBI" id="CHEBI:15378"/>
        <dbReference type="ChEBI" id="CHEBI:30616"/>
        <dbReference type="ChEBI" id="CHEBI:43474"/>
        <dbReference type="ChEBI" id="CHEBI:57844"/>
        <dbReference type="ChEBI" id="CHEBI:456216"/>
        <dbReference type="EC" id="7.4.2.11"/>
    </reaction>
</comment>
<comment type="catalytic activity">
    <reaction evidence="1">
        <text>D-methionine(out) + ATP + H2O = D-methionine(in) + ADP + phosphate + H(+)</text>
        <dbReference type="Rhea" id="RHEA:29767"/>
        <dbReference type="ChEBI" id="CHEBI:15377"/>
        <dbReference type="ChEBI" id="CHEBI:15378"/>
        <dbReference type="ChEBI" id="CHEBI:30616"/>
        <dbReference type="ChEBI" id="CHEBI:43474"/>
        <dbReference type="ChEBI" id="CHEBI:57932"/>
        <dbReference type="ChEBI" id="CHEBI:456216"/>
        <dbReference type="EC" id="7.4.2.11"/>
    </reaction>
</comment>
<comment type="subunit">
    <text evidence="1">The complex is composed of two ATP-binding proteins (MetN), two transmembrane proteins (MetI) and a solute-binding protein (MetQ).</text>
</comment>
<comment type="subcellular location">
    <subcellularLocation>
        <location evidence="1">Cell membrane</location>
        <topology evidence="1">Peripheral membrane protein</topology>
    </subcellularLocation>
</comment>
<comment type="similarity">
    <text evidence="1">Belongs to the ABC transporter superfamily. Methionine importer (TC 3.A.1.24) family.</text>
</comment>
<dbReference type="EC" id="7.4.2.11" evidence="1"/>
<dbReference type="EMBL" id="AE017283">
    <property type="protein sequence ID" value="AAT83488.1"/>
    <property type="molecule type" value="Genomic_DNA"/>
</dbReference>
<dbReference type="RefSeq" id="WP_002514762.1">
    <property type="nucleotide sequence ID" value="NZ_CP025935.1"/>
</dbReference>
<dbReference type="SMR" id="Q6A6X6"/>
<dbReference type="EnsemblBacteria" id="AAT83488">
    <property type="protein sequence ID" value="AAT83488"/>
    <property type="gene ID" value="PPA1759"/>
</dbReference>
<dbReference type="KEGG" id="pac:PPA1759"/>
<dbReference type="eggNOG" id="COG1135">
    <property type="taxonomic scope" value="Bacteria"/>
</dbReference>
<dbReference type="HOGENOM" id="CLU_000604_1_3_11"/>
<dbReference type="Proteomes" id="UP000000603">
    <property type="component" value="Chromosome"/>
</dbReference>
<dbReference type="GO" id="GO:0005886">
    <property type="term" value="C:plasma membrane"/>
    <property type="evidence" value="ECO:0007669"/>
    <property type="project" value="UniProtKB-SubCell"/>
</dbReference>
<dbReference type="GO" id="GO:0033232">
    <property type="term" value="F:ABC-type D-methionine transporter activity"/>
    <property type="evidence" value="ECO:0007669"/>
    <property type="project" value="UniProtKB-EC"/>
</dbReference>
<dbReference type="GO" id="GO:0005524">
    <property type="term" value="F:ATP binding"/>
    <property type="evidence" value="ECO:0007669"/>
    <property type="project" value="UniProtKB-KW"/>
</dbReference>
<dbReference type="GO" id="GO:0016887">
    <property type="term" value="F:ATP hydrolysis activity"/>
    <property type="evidence" value="ECO:0007669"/>
    <property type="project" value="InterPro"/>
</dbReference>
<dbReference type="CDD" id="cd03258">
    <property type="entry name" value="ABC_MetN_methionine_transporter"/>
    <property type="match status" value="1"/>
</dbReference>
<dbReference type="FunFam" id="3.40.50.300:FF:000056">
    <property type="entry name" value="Cell division ATP-binding protein FtsE"/>
    <property type="match status" value="1"/>
</dbReference>
<dbReference type="Gene3D" id="3.40.50.300">
    <property type="entry name" value="P-loop containing nucleotide triphosphate hydrolases"/>
    <property type="match status" value="1"/>
</dbReference>
<dbReference type="InterPro" id="IPR003593">
    <property type="entry name" value="AAA+_ATPase"/>
</dbReference>
<dbReference type="InterPro" id="IPR003439">
    <property type="entry name" value="ABC_transporter-like_ATP-bd"/>
</dbReference>
<dbReference type="InterPro" id="IPR017871">
    <property type="entry name" value="ABC_transporter-like_CS"/>
</dbReference>
<dbReference type="InterPro" id="IPR041701">
    <property type="entry name" value="MetN_ABC"/>
</dbReference>
<dbReference type="InterPro" id="IPR050086">
    <property type="entry name" value="MetN_ABC_transporter-like"/>
</dbReference>
<dbReference type="InterPro" id="IPR027417">
    <property type="entry name" value="P-loop_NTPase"/>
</dbReference>
<dbReference type="PANTHER" id="PTHR43166">
    <property type="entry name" value="AMINO ACID IMPORT ATP-BINDING PROTEIN"/>
    <property type="match status" value="1"/>
</dbReference>
<dbReference type="PANTHER" id="PTHR43166:SF30">
    <property type="entry name" value="METHIONINE IMPORT ATP-BINDING PROTEIN METN"/>
    <property type="match status" value="1"/>
</dbReference>
<dbReference type="Pfam" id="PF00005">
    <property type="entry name" value="ABC_tran"/>
    <property type="match status" value="1"/>
</dbReference>
<dbReference type="SMART" id="SM00382">
    <property type="entry name" value="AAA"/>
    <property type="match status" value="1"/>
</dbReference>
<dbReference type="SUPFAM" id="SSF52540">
    <property type="entry name" value="P-loop containing nucleoside triphosphate hydrolases"/>
    <property type="match status" value="1"/>
</dbReference>
<dbReference type="PROSITE" id="PS00211">
    <property type="entry name" value="ABC_TRANSPORTER_1"/>
    <property type="match status" value="1"/>
</dbReference>
<dbReference type="PROSITE" id="PS50893">
    <property type="entry name" value="ABC_TRANSPORTER_2"/>
    <property type="match status" value="1"/>
</dbReference>
<dbReference type="PROSITE" id="PS51264">
    <property type="entry name" value="METN"/>
    <property type="match status" value="1"/>
</dbReference>
<accession>Q6A6X6</accession>
<reference key="1">
    <citation type="journal article" date="2004" name="Science">
        <title>The complete genome sequence of Propionibacterium acnes, a commensal of human skin.</title>
        <authorList>
            <person name="Brueggemann H."/>
            <person name="Henne A."/>
            <person name="Hoster F."/>
            <person name="Liesegang H."/>
            <person name="Wiezer A."/>
            <person name="Strittmatter A."/>
            <person name="Hujer S."/>
            <person name="Duerre P."/>
            <person name="Gottschalk G."/>
        </authorList>
    </citation>
    <scope>NUCLEOTIDE SEQUENCE [LARGE SCALE GENOMIC DNA]</scope>
    <source>
        <strain>DSM 16379 / KPA171202</strain>
    </source>
</reference>
<name>METN_CUTAK</name>
<keyword id="KW-0029">Amino-acid transport</keyword>
<keyword id="KW-0067">ATP-binding</keyword>
<keyword id="KW-1003">Cell membrane</keyword>
<keyword id="KW-0472">Membrane</keyword>
<keyword id="KW-0547">Nucleotide-binding</keyword>
<keyword id="KW-1278">Translocase</keyword>
<keyword id="KW-0813">Transport</keyword>
<proteinExistence type="inferred from homology"/>
<gene>
    <name evidence="1" type="primary">metN</name>
    <name type="ordered locus">PPA1759</name>
</gene>